<accession>O32861</accession>
<accession>D1J8P7</accession>
<organism>
    <name type="scientific">Metamycoplasma hominis (strain ATCC 23114 / DSM 25592 / NBRC 14850 / NCTC 10111 / PG21)</name>
    <name type="common">Mycoplasma hominis</name>
    <dbReference type="NCBI Taxonomy" id="347256"/>
    <lineage>
        <taxon>Bacteria</taxon>
        <taxon>Bacillati</taxon>
        <taxon>Mycoplasmatota</taxon>
        <taxon>Mycoplasmoidales</taxon>
        <taxon>Metamycoplasmataceae</taxon>
        <taxon>Metamycoplasma</taxon>
    </lineage>
</organism>
<evidence type="ECO:0000255" key="1">
    <source>
        <dbReference type="HAMAP-Rule" id="MF_00920"/>
    </source>
</evidence>
<keyword id="KW-1003">Cell membrane</keyword>
<keyword id="KW-0963">Cytoplasm</keyword>
<keyword id="KW-0342">GTP-binding</keyword>
<keyword id="KW-0378">Hydrolase</keyword>
<keyword id="KW-0472">Membrane</keyword>
<keyword id="KW-0547">Nucleotide-binding</keyword>
<keyword id="KW-0675">Receptor</keyword>
<keyword id="KW-1185">Reference proteome</keyword>
<sequence>MGFWSNLKDKLFGTKEERIAKKQAKIEAKEQRQLEKELIKKNKLNTYIAGLSKSNSSFNEHIKELQNKHNKIDEEFFEDLEEMLIMSDISIKLVQIIINECKKEVRNENITDPKLINEIIADKLFTIYTSNSVVDTTLNIKDNRLNVILVVGVNGSGKTTSISKIAKKLIDEGKKVLIAAGDTFRAAAVEQLEIWAKRVGADIVTPNENEVDPAAVVYRAIDIAKSKKYDILIVDTAGRLQNKVNLMNELAKINRVLASKIPDAPHESLLVLDATTGQNGVIQARVFKESTPLTGIILTKMDGTSKGGIVLTIKDEIGLFVKYIGLGEKVDDLAEFDLDSYIYGLTKGINE</sequence>
<proteinExistence type="inferred from homology"/>
<dbReference type="EC" id="3.6.5.4" evidence="1"/>
<dbReference type="EMBL" id="Y11726">
    <property type="protein sequence ID" value="CAA72412.1"/>
    <property type="molecule type" value="Genomic_DNA"/>
</dbReference>
<dbReference type="EMBL" id="FP236530">
    <property type="protein sequence ID" value="CAX37594.1"/>
    <property type="molecule type" value="Genomic_DNA"/>
</dbReference>
<dbReference type="RefSeq" id="WP_012855733.1">
    <property type="nucleotide sequence ID" value="NC_013511.1"/>
</dbReference>
<dbReference type="SMR" id="O32861"/>
<dbReference type="STRING" id="347256.MHO_4590"/>
<dbReference type="PaxDb" id="347256-MHO_4590"/>
<dbReference type="KEGG" id="mho:MHO_4590"/>
<dbReference type="eggNOG" id="COG0552">
    <property type="taxonomic scope" value="Bacteria"/>
</dbReference>
<dbReference type="HOGENOM" id="CLU_009301_3_4_14"/>
<dbReference type="Proteomes" id="UP000002631">
    <property type="component" value="Chromosome"/>
</dbReference>
<dbReference type="GO" id="GO:0005737">
    <property type="term" value="C:cytoplasm"/>
    <property type="evidence" value="ECO:0007669"/>
    <property type="project" value="UniProtKB-SubCell"/>
</dbReference>
<dbReference type="GO" id="GO:0005886">
    <property type="term" value="C:plasma membrane"/>
    <property type="evidence" value="ECO:0007669"/>
    <property type="project" value="UniProtKB-SubCell"/>
</dbReference>
<dbReference type="GO" id="GO:0016887">
    <property type="term" value="F:ATP hydrolysis activity"/>
    <property type="evidence" value="ECO:0007669"/>
    <property type="project" value="InterPro"/>
</dbReference>
<dbReference type="GO" id="GO:0005525">
    <property type="term" value="F:GTP binding"/>
    <property type="evidence" value="ECO:0007669"/>
    <property type="project" value="UniProtKB-UniRule"/>
</dbReference>
<dbReference type="GO" id="GO:0003924">
    <property type="term" value="F:GTPase activity"/>
    <property type="evidence" value="ECO:0007669"/>
    <property type="project" value="UniProtKB-UniRule"/>
</dbReference>
<dbReference type="GO" id="GO:0005047">
    <property type="term" value="F:signal recognition particle binding"/>
    <property type="evidence" value="ECO:0007669"/>
    <property type="project" value="TreeGrafter"/>
</dbReference>
<dbReference type="GO" id="GO:0006614">
    <property type="term" value="P:SRP-dependent cotranslational protein targeting to membrane"/>
    <property type="evidence" value="ECO:0007669"/>
    <property type="project" value="InterPro"/>
</dbReference>
<dbReference type="CDD" id="cd17874">
    <property type="entry name" value="FtsY"/>
    <property type="match status" value="1"/>
</dbReference>
<dbReference type="FunFam" id="1.20.120.140:FF:000002">
    <property type="entry name" value="Signal recognition particle receptor FtsY"/>
    <property type="match status" value="1"/>
</dbReference>
<dbReference type="FunFam" id="3.40.50.300:FF:000053">
    <property type="entry name" value="Signal recognition particle receptor FtsY"/>
    <property type="match status" value="1"/>
</dbReference>
<dbReference type="Gene3D" id="3.40.50.300">
    <property type="entry name" value="P-loop containing nucleotide triphosphate hydrolases"/>
    <property type="match status" value="1"/>
</dbReference>
<dbReference type="Gene3D" id="1.20.120.140">
    <property type="entry name" value="Signal recognition particle SRP54, nucleotide-binding domain"/>
    <property type="match status" value="1"/>
</dbReference>
<dbReference type="HAMAP" id="MF_00920">
    <property type="entry name" value="FtsY"/>
    <property type="match status" value="1"/>
</dbReference>
<dbReference type="InterPro" id="IPR003593">
    <property type="entry name" value="AAA+_ATPase"/>
</dbReference>
<dbReference type="InterPro" id="IPR027417">
    <property type="entry name" value="P-loop_NTPase"/>
</dbReference>
<dbReference type="InterPro" id="IPR013822">
    <property type="entry name" value="Signal_recog_particl_SRP54_hlx"/>
</dbReference>
<dbReference type="InterPro" id="IPR004390">
    <property type="entry name" value="SR_rcpt_FtsY"/>
</dbReference>
<dbReference type="InterPro" id="IPR036225">
    <property type="entry name" value="SRP/SRP_N"/>
</dbReference>
<dbReference type="InterPro" id="IPR000897">
    <property type="entry name" value="SRP54_GTPase_dom"/>
</dbReference>
<dbReference type="InterPro" id="IPR042101">
    <property type="entry name" value="SRP54_N_sf"/>
</dbReference>
<dbReference type="NCBIfam" id="TIGR00064">
    <property type="entry name" value="ftsY"/>
    <property type="match status" value="1"/>
</dbReference>
<dbReference type="PANTHER" id="PTHR43134">
    <property type="entry name" value="SIGNAL RECOGNITION PARTICLE RECEPTOR SUBUNIT ALPHA"/>
    <property type="match status" value="1"/>
</dbReference>
<dbReference type="PANTHER" id="PTHR43134:SF1">
    <property type="entry name" value="SIGNAL RECOGNITION PARTICLE RECEPTOR SUBUNIT ALPHA"/>
    <property type="match status" value="1"/>
</dbReference>
<dbReference type="Pfam" id="PF00448">
    <property type="entry name" value="SRP54"/>
    <property type="match status" value="1"/>
</dbReference>
<dbReference type="Pfam" id="PF02881">
    <property type="entry name" value="SRP54_N"/>
    <property type="match status" value="1"/>
</dbReference>
<dbReference type="SMART" id="SM00382">
    <property type="entry name" value="AAA"/>
    <property type="match status" value="1"/>
</dbReference>
<dbReference type="SMART" id="SM00962">
    <property type="entry name" value="SRP54"/>
    <property type="match status" value="1"/>
</dbReference>
<dbReference type="SMART" id="SM00963">
    <property type="entry name" value="SRP54_N"/>
    <property type="match status" value="1"/>
</dbReference>
<dbReference type="SUPFAM" id="SSF47364">
    <property type="entry name" value="Domain of the SRP/SRP receptor G-proteins"/>
    <property type="match status" value="1"/>
</dbReference>
<dbReference type="SUPFAM" id="SSF52540">
    <property type="entry name" value="P-loop containing nucleoside triphosphate hydrolases"/>
    <property type="match status" value="1"/>
</dbReference>
<feature type="chain" id="PRO_0000101136" description="Signal recognition particle receptor FtsY">
    <location>
        <begin position="1"/>
        <end position="351"/>
    </location>
</feature>
<feature type="binding site" evidence="1">
    <location>
        <begin position="152"/>
        <end position="159"/>
    </location>
    <ligand>
        <name>GTP</name>
        <dbReference type="ChEBI" id="CHEBI:37565"/>
    </ligand>
</feature>
<feature type="binding site" evidence="1">
    <location>
        <begin position="235"/>
        <end position="239"/>
    </location>
    <ligand>
        <name>GTP</name>
        <dbReference type="ChEBI" id="CHEBI:37565"/>
    </ligand>
</feature>
<feature type="binding site" evidence="1">
    <location>
        <begin position="299"/>
        <end position="302"/>
    </location>
    <ligand>
        <name>GTP</name>
        <dbReference type="ChEBI" id="CHEBI:37565"/>
    </ligand>
</feature>
<name>FTSY_METH1</name>
<protein>
    <recommendedName>
        <fullName evidence="1">Signal recognition particle receptor FtsY</fullName>
        <shortName evidence="1">SRP receptor</shortName>
        <ecNumber evidence="1">3.6.5.4</ecNumber>
    </recommendedName>
</protein>
<reference key="1">
    <citation type="submission" date="1997-02" db="EMBL/GenBank/DDBJ databases">
        <authorList>
            <person name="Ladefoged S.A."/>
            <person name="Christiansen G."/>
        </authorList>
    </citation>
    <scope>NUCLEOTIDE SEQUENCE [GENOMIC DNA]</scope>
</reference>
<reference key="2">
    <citation type="journal article" date="2009" name="PLoS Genet.">
        <title>Life on arginine for Mycoplasma hominis: clues from its minimal genome and comparison with other human urogenital mycoplasmas.</title>
        <authorList>
            <person name="Pereyre S."/>
            <person name="Sirand-Pugnet P."/>
            <person name="Beven L."/>
            <person name="Charron A."/>
            <person name="Renaudin H."/>
            <person name="Barre A."/>
            <person name="Avenaud P."/>
            <person name="Jacob D."/>
            <person name="Couloux A."/>
            <person name="Barbe V."/>
            <person name="de Daruvar A."/>
            <person name="Blanchard A."/>
            <person name="Bebear C."/>
        </authorList>
    </citation>
    <scope>NUCLEOTIDE SEQUENCE [LARGE SCALE GENOMIC DNA]</scope>
    <source>
        <strain>ATCC 23114 / DSM 25592 / NBRC 14850 / NCTC 10111 / PG21</strain>
    </source>
</reference>
<gene>
    <name evidence="1" type="primary">ftsY</name>
    <name type="ordered locus">MHO_4590</name>
</gene>
<comment type="function">
    <text evidence="1">Involved in targeting and insertion of nascent membrane proteins into the cytoplasmic membrane. Acts as a receptor for the complex formed by the signal recognition particle (SRP) and the ribosome-nascent chain (RNC).</text>
</comment>
<comment type="catalytic activity">
    <reaction evidence="1">
        <text>GTP + H2O = GDP + phosphate + H(+)</text>
        <dbReference type="Rhea" id="RHEA:19669"/>
        <dbReference type="ChEBI" id="CHEBI:15377"/>
        <dbReference type="ChEBI" id="CHEBI:15378"/>
        <dbReference type="ChEBI" id="CHEBI:37565"/>
        <dbReference type="ChEBI" id="CHEBI:43474"/>
        <dbReference type="ChEBI" id="CHEBI:58189"/>
        <dbReference type="EC" id="3.6.5.4"/>
    </reaction>
</comment>
<comment type="subunit">
    <text evidence="1">Part of the signal recognition particle protein translocation system, which is composed of SRP and FtsY.</text>
</comment>
<comment type="subcellular location">
    <subcellularLocation>
        <location>Cell membrane</location>
        <topology>Peripheral membrane protein</topology>
        <orientation>Cytoplasmic side</orientation>
    </subcellularLocation>
    <subcellularLocation>
        <location evidence="1">Cytoplasm</location>
    </subcellularLocation>
</comment>
<comment type="similarity">
    <text evidence="1">Belongs to the GTP-binding SRP family. FtsY subfamily.</text>
</comment>